<reference key="1">
    <citation type="journal article" date="2011" name="Stand. Genomic Sci.">
        <title>Complete genome sequence of 'Thioalkalivibrio sulfidophilus' HL-EbGr7.</title>
        <authorList>
            <person name="Muyzer G."/>
            <person name="Sorokin D.Y."/>
            <person name="Mavromatis K."/>
            <person name="Lapidus A."/>
            <person name="Clum A."/>
            <person name="Ivanova N."/>
            <person name="Pati A."/>
            <person name="d'Haeseleer P."/>
            <person name="Woyke T."/>
            <person name="Kyrpides N.C."/>
        </authorList>
    </citation>
    <scope>NUCLEOTIDE SEQUENCE [LARGE SCALE GENOMIC DNA]</scope>
    <source>
        <strain>HL-EbGR7</strain>
    </source>
</reference>
<evidence type="ECO:0000255" key="1">
    <source>
        <dbReference type="HAMAP-Rule" id="MF_01318"/>
    </source>
</evidence>
<evidence type="ECO:0000305" key="2"/>
<dbReference type="EMBL" id="CP001339">
    <property type="protein sequence ID" value="ACL73414.1"/>
    <property type="molecule type" value="Genomic_DNA"/>
</dbReference>
<dbReference type="RefSeq" id="WP_012638890.1">
    <property type="nucleotide sequence ID" value="NC_011901.1"/>
</dbReference>
<dbReference type="SMR" id="B8GV68"/>
<dbReference type="STRING" id="396588.Tgr7_2334"/>
<dbReference type="KEGG" id="tgr:Tgr7_2334"/>
<dbReference type="eggNOG" id="COG0081">
    <property type="taxonomic scope" value="Bacteria"/>
</dbReference>
<dbReference type="HOGENOM" id="CLU_062853_0_0_6"/>
<dbReference type="OrthoDB" id="9803740at2"/>
<dbReference type="Proteomes" id="UP000002383">
    <property type="component" value="Chromosome"/>
</dbReference>
<dbReference type="GO" id="GO:0022625">
    <property type="term" value="C:cytosolic large ribosomal subunit"/>
    <property type="evidence" value="ECO:0007669"/>
    <property type="project" value="TreeGrafter"/>
</dbReference>
<dbReference type="GO" id="GO:0019843">
    <property type="term" value="F:rRNA binding"/>
    <property type="evidence" value="ECO:0007669"/>
    <property type="project" value="UniProtKB-UniRule"/>
</dbReference>
<dbReference type="GO" id="GO:0003735">
    <property type="term" value="F:structural constituent of ribosome"/>
    <property type="evidence" value="ECO:0007669"/>
    <property type="project" value="InterPro"/>
</dbReference>
<dbReference type="GO" id="GO:0000049">
    <property type="term" value="F:tRNA binding"/>
    <property type="evidence" value="ECO:0007669"/>
    <property type="project" value="UniProtKB-KW"/>
</dbReference>
<dbReference type="GO" id="GO:0006417">
    <property type="term" value="P:regulation of translation"/>
    <property type="evidence" value="ECO:0007669"/>
    <property type="project" value="UniProtKB-KW"/>
</dbReference>
<dbReference type="GO" id="GO:0006412">
    <property type="term" value="P:translation"/>
    <property type="evidence" value="ECO:0007669"/>
    <property type="project" value="UniProtKB-UniRule"/>
</dbReference>
<dbReference type="CDD" id="cd00403">
    <property type="entry name" value="Ribosomal_L1"/>
    <property type="match status" value="1"/>
</dbReference>
<dbReference type="FunFam" id="3.40.50.790:FF:000001">
    <property type="entry name" value="50S ribosomal protein L1"/>
    <property type="match status" value="1"/>
</dbReference>
<dbReference type="Gene3D" id="3.30.190.20">
    <property type="match status" value="1"/>
</dbReference>
<dbReference type="Gene3D" id="3.40.50.790">
    <property type="match status" value="1"/>
</dbReference>
<dbReference type="HAMAP" id="MF_01318_B">
    <property type="entry name" value="Ribosomal_uL1_B"/>
    <property type="match status" value="1"/>
</dbReference>
<dbReference type="InterPro" id="IPR005878">
    <property type="entry name" value="Ribosom_uL1_bac-type"/>
</dbReference>
<dbReference type="InterPro" id="IPR002143">
    <property type="entry name" value="Ribosomal_uL1"/>
</dbReference>
<dbReference type="InterPro" id="IPR023674">
    <property type="entry name" value="Ribosomal_uL1-like"/>
</dbReference>
<dbReference type="InterPro" id="IPR028364">
    <property type="entry name" value="Ribosomal_uL1/biogenesis"/>
</dbReference>
<dbReference type="InterPro" id="IPR016095">
    <property type="entry name" value="Ribosomal_uL1_3-a/b-sand"/>
</dbReference>
<dbReference type="InterPro" id="IPR023673">
    <property type="entry name" value="Ribosomal_uL1_CS"/>
</dbReference>
<dbReference type="NCBIfam" id="TIGR01169">
    <property type="entry name" value="rplA_bact"/>
    <property type="match status" value="1"/>
</dbReference>
<dbReference type="PANTHER" id="PTHR36427">
    <property type="entry name" value="54S RIBOSOMAL PROTEIN L1, MITOCHONDRIAL"/>
    <property type="match status" value="1"/>
</dbReference>
<dbReference type="PANTHER" id="PTHR36427:SF3">
    <property type="entry name" value="LARGE RIBOSOMAL SUBUNIT PROTEIN UL1M"/>
    <property type="match status" value="1"/>
</dbReference>
<dbReference type="Pfam" id="PF00687">
    <property type="entry name" value="Ribosomal_L1"/>
    <property type="match status" value="1"/>
</dbReference>
<dbReference type="PIRSF" id="PIRSF002155">
    <property type="entry name" value="Ribosomal_L1"/>
    <property type="match status" value="1"/>
</dbReference>
<dbReference type="SUPFAM" id="SSF56808">
    <property type="entry name" value="Ribosomal protein L1"/>
    <property type="match status" value="1"/>
</dbReference>
<dbReference type="PROSITE" id="PS01199">
    <property type="entry name" value="RIBOSOMAL_L1"/>
    <property type="match status" value="1"/>
</dbReference>
<gene>
    <name evidence="1" type="primary">rplA</name>
    <name type="ordered locus">Tgr7_2334</name>
</gene>
<protein>
    <recommendedName>
        <fullName evidence="1">Large ribosomal subunit protein uL1</fullName>
    </recommendedName>
    <alternativeName>
        <fullName evidence="2">50S ribosomal protein L1</fullName>
    </alternativeName>
</protein>
<comment type="function">
    <text evidence="1">Binds directly to 23S rRNA. The L1 stalk is quite mobile in the ribosome, and is involved in E site tRNA release.</text>
</comment>
<comment type="function">
    <text evidence="1">Protein L1 is also a translational repressor protein, it controls the translation of the L11 operon by binding to its mRNA.</text>
</comment>
<comment type="subunit">
    <text evidence="1">Part of the 50S ribosomal subunit.</text>
</comment>
<comment type="similarity">
    <text evidence="1">Belongs to the universal ribosomal protein uL1 family.</text>
</comment>
<proteinExistence type="inferred from homology"/>
<sequence>MAKLTKRMRAIREKIEAGKLYPANEAFALLKEISSVKFAESVDVSVNLGVDPRKSDQVVRGSTVLPNGTGKTVRVAVFTQGANAEAAKAAGADIVGMDDLAAEVKKGNMDFDVVIATPDAMRVVGQLGQILGPRGLMPNPKVGTVTTDVATAVKNAKGGQVRYRTDKAGIIHCSIGKVGFEPDALKENLNALLADLQKAKPSAAKGVYMKKVTVSTTMGPGIAVDQASLSA</sequence>
<accession>B8GV68</accession>
<keyword id="KW-1185">Reference proteome</keyword>
<keyword id="KW-0678">Repressor</keyword>
<keyword id="KW-0687">Ribonucleoprotein</keyword>
<keyword id="KW-0689">Ribosomal protein</keyword>
<keyword id="KW-0694">RNA-binding</keyword>
<keyword id="KW-0699">rRNA-binding</keyword>
<keyword id="KW-0810">Translation regulation</keyword>
<keyword id="KW-0820">tRNA-binding</keyword>
<feature type="chain" id="PRO_1000165709" description="Large ribosomal subunit protein uL1">
    <location>
        <begin position="1"/>
        <end position="231"/>
    </location>
</feature>
<organism>
    <name type="scientific">Thioalkalivibrio sulfidiphilus (strain HL-EbGR7)</name>
    <dbReference type="NCBI Taxonomy" id="396588"/>
    <lineage>
        <taxon>Bacteria</taxon>
        <taxon>Pseudomonadati</taxon>
        <taxon>Pseudomonadota</taxon>
        <taxon>Gammaproteobacteria</taxon>
        <taxon>Chromatiales</taxon>
        <taxon>Ectothiorhodospiraceae</taxon>
        <taxon>Thioalkalivibrio</taxon>
    </lineage>
</organism>
<name>RL1_THISH</name>